<sequence length="386" mass="41828">MKIHEYQAKQLFRKYSIPVPEGLLCTNLQEVKTALKSLQLPIAVKAQIHAGGRGKGGGVKLGKTATEVVQYADDILGMSLVTAQTGPSGRTVSKILLEEGVSIARELYLSILVDRERACITIIACQDGGMNIEEVAASTPERIGKIHINPLIGPRSYHINQAREWLNIAQEQARAFSLFIHALYKLFLDYDCSMVEINPLIITEDNQLIALDAKVDTDSNALFRQRELQKMHDPAEDDPAEAEAAKFNLNYIKLSGNVGNMVNGAGLAMATMDIIKRAGAEPANFLDVGGSADAERIENGFRIILADTNVKAILINIFGGILRCDILAQGVVQAAAKVSLQVPVVIRMEGTNVKEGREILAKSGLSLINATDLNDAAEKISTLLTD</sequence>
<proteinExistence type="inferred from homology"/>
<evidence type="ECO:0000255" key="1">
    <source>
        <dbReference type="HAMAP-Rule" id="MF_00558"/>
    </source>
</evidence>
<feature type="chain" id="PRO_1000082071" description="Succinate--CoA ligase [ADP-forming] subunit beta">
    <location>
        <begin position="1"/>
        <end position="386"/>
    </location>
</feature>
<feature type="domain" description="ATP-grasp" evidence="1">
    <location>
        <begin position="9"/>
        <end position="243"/>
    </location>
</feature>
<feature type="binding site" evidence="1">
    <location>
        <position position="45"/>
    </location>
    <ligand>
        <name>ATP</name>
        <dbReference type="ChEBI" id="CHEBI:30616"/>
    </ligand>
</feature>
<feature type="binding site" evidence="1">
    <location>
        <begin position="52"/>
        <end position="54"/>
    </location>
    <ligand>
        <name>ATP</name>
        <dbReference type="ChEBI" id="CHEBI:30616"/>
    </ligand>
</feature>
<feature type="binding site" evidence="1">
    <location>
        <position position="98"/>
    </location>
    <ligand>
        <name>ATP</name>
        <dbReference type="ChEBI" id="CHEBI:30616"/>
    </ligand>
</feature>
<feature type="binding site" evidence="1">
    <location>
        <position position="101"/>
    </location>
    <ligand>
        <name>ATP</name>
        <dbReference type="ChEBI" id="CHEBI:30616"/>
    </ligand>
</feature>
<feature type="binding site" evidence="1">
    <location>
        <position position="106"/>
    </location>
    <ligand>
        <name>ATP</name>
        <dbReference type="ChEBI" id="CHEBI:30616"/>
    </ligand>
</feature>
<feature type="binding site" evidence="1">
    <location>
        <position position="198"/>
    </location>
    <ligand>
        <name>Mg(2+)</name>
        <dbReference type="ChEBI" id="CHEBI:18420"/>
    </ligand>
</feature>
<feature type="binding site" evidence="1">
    <location>
        <position position="212"/>
    </location>
    <ligand>
        <name>Mg(2+)</name>
        <dbReference type="ChEBI" id="CHEBI:18420"/>
    </ligand>
</feature>
<feature type="binding site" evidence="1">
    <location>
        <position position="263"/>
    </location>
    <ligand>
        <name>substrate</name>
        <note>ligand shared with subunit alpha</note>
    </ligand>
</feature>
<feature type="binding site" evidence="1">
    <location>
        <begin position="320"/>
        <end position="322"/>
    </location>
    <ligand>
        <name>substrate</name>
        <note>ligand shared with subunit alpha</note>
    </ligand>
</feature>
<dbReference type="EC" id="6.2.1.5" evidence="1"/>
<dbReference type="EMBL" id="CR522870">
    <property type="protein sequence ID" value="CAG35013.1"/>
    <property type="molecule type" value="Genomic_DNA"/>
</dbReference>
<dbReference type="RefSeq" id="WP_011187529.1">
    <property type="nucleotide sequence ID" value="NC_006138.1"/>
</dbReference>
<dbReference type="SMR" id="Q6ARL2"/>
<dbReference type="STRING" id="177439.DP0284"/>
<dbReference type="KEGG" id="dps:DP0284"/>
<dbReference type="eggNOG" id="COG0045">
    <property type="taxonomic scope" value="Bacteria"/>
</dbReference>
<dbReference type="HOGENOM" id="CLU_037430_0_2_7"/>
<dbReference type="OrthoDB" id="9802602at2"/>
<dbReference type="UniPathway" id="UPA00223">
    <property type="reaction ID" value="UER00999"/>
</dbReference>
<dbReference type="Proteomes" id="UP000000602">
    <property type="component" value="Chromosome"/>
</dbReference>
<dbReference type="GO" id="GO:0005829">
    <property type="term" value="C:cytosol"/>
    <property type="evidence" value="ECO:0007669"/>
    <property type="project" value="TreeGrafter"/>
</dbReference>
<dbReference type="GO" id="GO:0042709">
    <property type="term" value="C:succinate-CoA ligase complex"/>
    <property type="evidence" value="ECO:0007669"/>
    <property type="project" value="TreeGrafter"/>
</dbReference>
<dbReference type="GO" id="GO:0005524">
    <property type="term" value="F:ATP binding"/>
    <property type="evidence" value="ECO:0007669"/>
    <property type="project" value="UniProtKB-UniRule"/>
</dbReference>
<dbReference type="GO" id="GO:0000287">
    <property type="term" value="F:magnesium ion binding"/>
    <property type="evidence" value="ECO:0007669"/>
    <property type="project" value="UniProtKB-UniRule"/>
</dbReference>
<dbReference type="GO" id="GO:0004775">
    <property type="term" value="F:succinate-CoA ligase (ADP-forming) activity"/>
    <property type="evidence" value="ECO:0007669"/>
    <property type="project" value="UniProtKB-UniRule"/>
</dbReference>
<dbReference type="GO" id="GO:0004776">
    <property type="term" value="F:succinate-CoA ligase (GDP-forming) activity"/>
    <property type="evidence" value="ECO:0007669"/>
    <property type="project" value="RHEA"/>
</dbReference>
<dbReference type="GO" id="GO:0006104">
    <property type="term" value="P:succinyl-CoA metabolic process"/>
    <property type="evidence" value="ECO:0007669"/>
    <property type="project" value="TreeGrafter"/>
</dbReference>
<dbReference type="GO" id="GO:0006099">
    <property type="term" value="P:tricarboxylic acid cycle"/>
    <property type="evidence" value="ECO:0007669"/>
    <property type="project" value="UniProtKB-UniRule"/>
</dbReference>
<dbReference type="FunFam" id="3.30.1490.20:FF:000002">
    <property type="entry name" value="Succinate--CoA ligase [ADP-forming] subunit beta"/>
    <property type="match status" value="1"/>
</dbReference>
<dbReference type="FunFam" id="3.30.470.20:FF:000002">
    <property type="entry name" value="Succinate--CoA ligase [ADP-forming] subunit beta"/>
    <property type="match status" value="1"/>
</dbReference>
<dbReference type="FunFam" id="3.40.50.261:FF:000001">
    <property type="entry name" value="Succinate--CoA ligase [ADP-forming] subunit beta"/>
    <property type="match status" value="1"/>
</dbReference>
<dbReference type="Gene3D" id="3.30.1490.20">
    <property type="entry name" value="ATP-grasp fold, A domain"/>
    <property type="match status" value="1"/>
</dbReference>
<dbReference type="Gene3D" id="3.30.470.20">
    <property type="entry name" value="ATP-grasp fold, B domain"/>
    <property type="match status" value="1"/>
</dbReference>
<dbReference type="Gene3D" id="3.40.50.261">
    <property type="entry name" value="Succinyl-CoA synthetase domains"/>
    <property type="match status" value="1"/>
</dbReference>
<dbReference type="HAMAP" id="MF_00558">
    <property type="entry name" value="Succ_CoA_beta"/>
    <property type="match status" value="1"/>
</dbReference>
<dbReference type="InterPro" id="IPR011761">
    <property type="entry name" value="ATP-grasp"/>
</dbReference>
<dbReference type="InterPro" id="IPR013650">
    <property type="entry name" value="ATP-grasp_succ-CoA_synth-type"/>
</dbReference>
<dbReference type="InterPro" id="IPR013815">
    <property type="entry name" value="ATP_grasp_subdomain_1"/>
</dbReference>
<dbReference type="InterPro" id="IPR017866">
    <property type="entry name" value="Succ-CoA_synthase_bsu_CS"/>
</dbReference>
<dbReference type="InterPro" id="IPR005811">
    <property type="entry name" value="SUCC_ACL_C"/>
</dbReference>
<dbReference type="InterPro" id="IPR005809">
    <property type="entry name" value="Succ_CoA_ligase-like_bsu"/>
</dbReference>
<dbReference type="InterPro" id="IPR016102">
    <property type="entry name" value="Succinyl-CoA_synth-like"/>
</dbReference>
<dbReference type="NCBIfam" id="NF001913">
    <property type="entry name" value="PRK00696.1"/>
    <property type="match status" value="1"/>
</dbReference>
<dbReference type="NCBIfam" id="TIGR01016">
    <property type="entry name" value="sucCoAbeta"/>
    <property type="match status" value="1"/>
</dbReference>
<dbReference type="PANTHER" id="PTHR11815:SF10">
    <property type="entry name" value="SUCCINATE--COA LIGASE [GDP-FORMING] SUBUNIT BETA, MITOCHONDRIAL"/>
    <property type="match status" value="1"/>
</dbReference>
<dbReference type="PANTHER" id="PTHR11815">
    <property type="entry name" value="SUCCINYL-COA SYNTHETASE BETA CHAIN"/>
    <property type="match status" value="1"/>
</dbReference>
<dbReference type="Pfam" id="PF08442">
    <property type="entry name" value="ATP-grasp_2"/>
    <property type="match status" value="1"/>
</dbReference>
<dbReference type="Pfam" id="PF00549">
    <property type="entry name" value="Ligase_CoA"/>
    <property type="match status" value="1"/>
</dbReference>
<dbReference type="PIRSF" id="PIRSF001554">
    <property type="entry name" value="SucCS_beta"/>
    <property type="match status" value="1"/>
</dbReference>
<dbReference type="SUPFAM" id="SSF56059">
    <property type="entry name" value="Glutathione synthetase ATP-binding domain-like"/>
    <property type="match status" value="1"/>
</dbReference>
<dbReference type="SUPFAM" id="SSF52210">
    <property type="entry name" value="Succinyl-CoA synthetase domains"/>
    <property type="match status" value="1"/>
</dbReference>
<dbReference type="PROSITE" id="PS50975">
    <property type="entry name" value="ATP_GRASP"/>
    <property type="match status" value="1"/>
</dbReference>
<dbReference type="PROSITE" id="PS01217">
    <property type="entry name" value="SUCCINYL_COA_LIG_3"/>
    <property type="match status" value="1"/>
</dbReference>
<comment type="function">
    <text evidence="1">Succinyl-CoA synthetase functions in the citric acid cycle (TCA), coupling the hydrolysis of succinyl-CoA to the synthesis of either ATP or GTP and thus represents the only step of substrate-level phosphorylation in the TCA. The beta subunit provides nucleotide specificity of the enzyme and binds the substrate succinate, while the binding sites for coenzyme A and phosphate are found in the alpha subunit.</text>
</comment>
<comment type="catalytic activity">
    <reaction evidence="1">
        <text>succinate + ATP + CoA = succinyl-CoA + ADP + phosphate</text>
        <dbReference type="Rhea" id="RHEA:17661"/>
        <dbReference type="ChEBI" id="CHEBI:30031"/>
        <dbReference type="ChEBI" id="CHEBI:30616"/>
        <dbReference type="ChEBI" id="CHEBI:43474"/>
        <dbReference type="ChEBI" id="CHEBI:57287"/>
        <dbReference type="ChEBI" id="CHEBI:57292"/>
        <dbReference type="ChEBI" id="CHEBI:456216"/>
        <dbReference type="EC" id="6.2.1.5"/>
    </reaction>
    <physiologicalReaction direction="right-to-left" evidence="1">
        <dbReference type="Rhea" id="RHEA:17663"/>
    </physiologicalReaction>
</comment>
<comment type="catalytic activity">
    <reaction evidence="1">
        <text>GTP + succinate + CoA = succinyl-CoA + GDP + phosphate</text>
        <dbReference type="Rhea" id="RHEA:22120"/>
        <dbReference type="ChEBI" id="CHEBI:30031"/>
        <dbReference type="ChEBI" id="CHEBI:37565"/>
        <dbReference type="ChEBI" id="CHEBI:43474"/>
        <dbReference type="ChEBI" id="CHEBI:57287"/>
        <dbReference type="ChEBI" id="CHEBI:57292"/>
        <dbReference type="ChEBI" id="CHEBI:58189"/>
    </reaction>
    <physiologicalReaction direction="right-to-left" evidence="1">
        <dbReference type="Rhea" id="RHEA:22122"/>
    </physiologicalReaction>
</comment>
<comment type="cofactor">
    <cofactor evidence="1">
        <name>Mg(2+)</name>
        <dbReference type="ChEBI" id="CHEBI:18420"/>
    </cofactor>
    <text evidence="1">Binds 1 Mg(2+) ion per subunit.</text>
</comment>
<comment type="pathway">
    <text evidence="1">Carbohydrate metabolism; tricarboxylic acid cycle; succinate from succinyl-CoA (ligase route): step 1/1.</text>
</comment>
<comment type="subunit">
    <text evidence="1">Heterotetramer of two alpha and two beta subunits.</text>
</comment>
<comment type="similarity">
    <text evidence="1">Belongs to the succinate/malate CoA ligase beta subunit family.</text>
</comment>
<organism>
    <name type="scientific">Desulfotalea psychrophila (strain LSv54 / DSM 12343)</name>
    <dbReference type="NCBI Taxonomy" id="177439"/>
    <lineage>
        <taxon>Bacteria</taxon>
        <taxon>Pseudomonadati</taxon>
        <taxon>Thermodesulfobacteriota</taxon>
        <taxon>Desulfobulbia</taxon>
        <taxon>Desulfobulbales</taxon>
        <taxon>Desulfocapsaceae</taxon>
        <taxon>Desulfotalea</taxon>
    </lineage>
</organism>
<reference key="1">
    <citation type="journal article" date="2004" name="Environ. Microbiol.">
        <title>The genome of Desulfotalea psychrophila, a sulfate-reducing bacterium from permanently cold Arctic sediments.</title>
        <authorList>
            <person name="Rabus R."/>
            <person name="Ruepp A."/>
            <person name="Frickey T."/>
            <person name="Rattei T."/>
            <person name="Fartmann B."/>
            <person name="Stark M."/>
            <person name="Bauer M."/>
            <person name="Zibat A."/>
            <person name="Lombardot T."/>
            <person name="Becker I."/>
            <person name="Amann J."/>
            <person name="Gellner K."/>
            <person name="Teeling H."/>
            <person name="Leuschner W.D."/>
            <person name="Gloeckner F.-O."/>
            <person name="Lupas A.N."/>
            <person name="Amann R."/>
            <person name="Klenk H.-P."/>
        </authorList>
    </citation>
    <scope>NUCLEOTIDE SEQUENCE [LARGE SCALE GENOMIC DNA]</scope>
    <source>
        <strain>DSM 12343 / LSv54</strain>
    </source>
</reference>
<keyword id="KW-0067">ATP-binding</keyword>
<keyword id="KW-0436">Ligase</keyword>
<keyword id="KW-0460">Magnesium</keyword>
<keyword id="KW-0479">Metal-binding</keyword>
<keyword id="KW-0547">Nucleotide-binding</keyword>
<keyword id="KW-1185">Reference proteome</keyword>
<keyword id="KW-0816">Tricarboxylic acid cycle</keyword>
<gene>
    <name evidence="1" type="primary">sucC</name>
    <name type="ordered locus">DP0284</name>
</gene>
<protein>
    <recommendedName>
        <fullName evidence="1">Succinate--CoA ligase [ADP-forming] subunit beta</fullName>
        <ecNumber evidence="1">6.2.1.5</ecNumber>
    </recommendedName>
    <alternativeName>
        <fullName evidence="1">Succinyl-CoA synthetase subunit beta</fullName>
        <shortName evidence="1">SCS-beta</shortName>
    </alternativeName>
</protein>
<name>SUCC_DESPS</name>
<accession>Q6ARL2</accession>